<comment type="function">
    <text evidence="2 4 7 8">Functions as a fructose transporter that has only low activity with other monosaccharides (PubMed:12031501, PubMed:19091748). Can mediate the uptake of deoxyglucose, but with low efficiency (By similarity). Essential for fructose uptake in the small intestine (PubMed:19091748, PubMed:26071406). Plays a role in the regulation of salt uptake and blood pressure in response to dietary fructose (PubMed:19091748). Required for the development of high blood pressure in response to high dietary fructose intake (PubMed:19091748).</text>
</comment>
<comment type="catalytic activity">
    <reaction evidence="1">
        <text>D-fructose(out) = D-fructose(in)</text>
        <dbReference type="Rhea" id="RHEA:60372"/>
        <dbReference type="ChEBI" id="CHEBI:37721"/>
    </reaction>
</comment>
<comment type="activity regulation">
    <text evidence="4">Fructose uptake is inhibited by cytochalasin B.</text>
</comment>
<comment type="subcellular location">
    <subcellularLocation>
        <location evidence="6 7 8">Apical cell membrane</location>
        <topology evidence="6">Multi-pass membrane protein</topology>
    </subcellularLocation>
    <subcellularLocation>
        <location evidence="4 7">Cell membrane</location>
        <topology evidence="10">Multi-pass membrane protein</topology>
    </subcellularLocation>
    <subcellularLocation>
        <location evidence="2">Cell membrane</location>
        <location evidence="2">Sarcolemma</location>
    </subcellularLocation>
    <text evidence="6 8">Localized on the apical membrane of jejunum villi, but also on lateral plasma membranes of the villi (PubMed:18496516, PubMed:26071406). Transport to the cell membrane is dependent on RAB11A (PubMed:26071406).</text>
</comment>
<comment type="tissue specificity">
    <text evidence="4 5 6 7">Detected at the apical membrane of villi in the jejunum (PubMed:18496516, PubMed:19091748, PubMed:26071406). Detected in jejunum mucosa (PubMed:26071406). Detected in epididymis and whole testis (at protein level) (PubMed:18417103). Detected in small intestine, kidney and testis (PubMed:12031501, PubMed:18417103, PubMed:19091748). Detected in cochlea, but not in inner or outer cochlear hair cells (PubMed:18417103).</text>
</comment>
<comment type="induction">
    <text evidence="4 6">Up-regulated in jejunum by dietary fructose intake (at protein level) (PubMed:18496516). Up-regulated in jejunum by dietary fructose intake (PubMed:18496516, PubMed:26071406). Up-regulated by dietary fructose intake in small intestine and testis (PubMed:12031501).</text>
</comment>
<comment type="disruption phenotype">
    <text evidence="5 7 8">Mice fed a standard diet appear normal and healthy, and display no visible phenotype (PubMed:18417103, PubMed:19091748, PubMed:26071406). Mutant mice show reduced food intake when kept on a high-frucose diet and about 28% reduction of their body weight within seven days. They loose more weight than wild-type mice that receive similar amounts of high-fructose food (PubMed:19091748). Mutant mice show strongly decreased fructose absorption in the jejunum (PubMed:19091748, PubMed:26071406). Contrary to wild-type, mutant mice have a strongly distended colon and caecum when kept on a high-fructose diet. Their intestines look normal when they are fed a standard diet. Contrary to wild-type, mutant mice do not display increased fructose levels in blood serum when kept on a high-fructose diet. Contrary to wild-type, they do not show increased salt absorption in response to fructose, and do not develop high blood pressure in response to fructose feeding. On the contrary, the blood pressure of mutant mice is strongly decreased after five days on a high-fructose diet. Mutant mice develop hypovolemic shock and die after 7 to 10 days on high-fructose diet (PubMed:19091748). Mutant mice display no defects of cochlear morphology or any hearing defects (PubMed:18417103).</text>
</comment>
<comment type="similarity">
    <text evidence="10">Belongs to the major facilitator superfamily. Sugar transporter (TC 2.A.1.1) family. Glucose transporter subfamily.</text>
</comment>
<sequence>MEEKHQEETGELTLVLALATLIAAFGSSFQYGYNVAAVNSPSEFMQQFYNDTYYDRNEENIESFTLTLLWSLTVSMFPFGGFIGSLMVGTLVNKLGRKGALLFNNIFSILPAILMGCSQIAQSFELIIISRLLVGICAGISSNVVPMYLGELAPKNLRGALGVVPQLFITVGILVAQLFGLRSLLANEDGWPVLLGLTGVPAGLQLLLLPFFPESPRYLLIQKKDEAAAERALQTLRGWKDVHLEMEEIRKEDEAEKAAGFISVWKLFTMQSLRWQLISMIVLMAGQQLSGVNAIYYYADQIYLSAGVKSDDVQYVTAGTGAVNVFMTILTIFVVELWGRRFLLLVGFSTCLIACLVLTAALALQNTISWMPYISIVCVIVYVIGHALGPSPIPALLITEIFLQSSRPAAYMIGGSVHWLSNFTVGLIFPFIQMGLGPYSFIIFATICFLTTIYIFMVVPETKGRTFIEINQIFTMKNKVSDVYPKKEEELGALPHAILEQ</sequence>
<accession>Q9WV38</accession>
<accession>Q8R1N7</accession>
<feature type="chain" id="PRO_0000050370" description="Solute carrier family 2, facilitated glucose transporter member 5">
    <location>
        <begin position="1"/>
        <end position="501"/>
    </location>
</feature>
<feature type="topological domain" description="Cytoplasmic" evidence="2">
    <location>
        <begin position="1"/>
        <end position="17"/>
    </location>
</feature>
<feature type="transmembrane region" description="Helical; Name=1" evidence="2">
    <location>
        <begin position="18"/>
        <end position="38"/>
    </location>
</feature>
<feature type="topological domain" description="Extracellular" evidence="2">
    <location>
        <begin position="39"/>
        <end position="67"/>
    </location>
</feature>
<feature type="transmembrane region" description="Helical; Name=2" evidence="2">
    <location>
        <begin position="68"/>
        <end position="90"/>
    </location>
</feature>
<feature type="topological domain" description="Cytoplasmic" evidence="2">
    <location>
        <begin position="91"/>
        <end position="97"/>
    </location>
</feature>
<feature type="transmembrane region" description="Helical; Name=3" evidence="2">
    <location>
        <begin position="98"/>
        <end position="118"/>
    </location>
</feature>
<feature type="topological domain" description="Extracellular" evidence="2">
    <location>
        <begin position="119"/>
        <end position="125"/>
    </location>
</feature>
<feature type="transmembrane region" description="Helical; Name=4" evidence="2">
    <location>
        <begin position="126"/>
        <end position="148"/>
    </location>
</feature>
<feature type="topological domain" description="Cytoplasmic" evidence="2">
    <location>
        <begin position="149"/>
        <end position="160"/>
    </location>
</feature>
<feature type="transmembrane region" description="Helical; Name=5" evidence="2">
    <location>
        <begin position="161"/>
        <end position="181"/>
    </location>
</feature>
<feature type="topological domain" description="Extracellular" evidence="2">
    <location>
        <begin position="182"/>
        <end position="191"/>
    </location>
</feature>
<feature type="transmembrane region" description="Helical; Name=6" evidence="2">
    <location>
        <begin position="192"/>
        <end position="212"/>
    </location>
</feature>
<feature type="topological domain" description="Cytoplasmic" evidence="2">
    <location>
        <begin position="213"/>
        <end position="276"/>
    </location>
</feature>
<feature type="transmembrane region" description="Helical; Name=7" evidence="2">
    <location>
        <begin position="277"/>
        <end position="297"/>
    </location>
</feature>
<feature type="topological domain" description="Extracellular" evidence="2">
    <location>
        <begin position="298"/>
        <end position="312"/>
    </location>
</feature>
<feature type="transmembrane region" description="Helical; Name=8" evidence="2">
    <location>
        <begin position="313"/>
        <end position="333"/>
    </location>
</feature>
<feature type="topological domain" description="Cytoplasmic" evidence="2">
    <location>
        <begin position="334"/>
        <end position="341"/>
    </location>
</feature>
<feature type="transmembrane region" description="Helical; Name=9" evidence="2">
    <location>
        <begin position="342"/>
        <end position="362"/>
    </location>
</feature>
<feature type="topological domain" description="Extracellular" evidence="2">
    <location>
        <begin position="363"/>
        <end position="370"/>
    </location>
</feature>
<feature type="transmembrane region" description="Helical; Name=10" evidence="2">
    <location>
        <begin position="371"/>
        <end position="393"/>
    </location>
</feature>
<feature type="topological domain" description="Cytoplasmic" evidence="2">
    <location>
        <begin position="394"/>
        <end position="411"/>
    </location>
</feature>
<feature type="transmembrane region" description="Helical; Name=11" evidence="2">
    <location>
        <begin position="412"/>
        <end position="432"/>
    </location>
</feature>
<feature type="topological domain" description="Extracellular" evidence="2">
    <location>
        <begin position="433"/>
        <end position="438"/>
    </location>
</feature>
<feature type="transmembrane region" description="Helical; Name=12" evidence="2">
    <location>
        <begin position="439"/>
        <end position="459"/>
    </location>
</feature>
<feature type="topological domain" description="Cytoplasmic" evidence="2">
    <location>
        <begin position="460"/>
        <end position="501"/>
    </location>
</feature>
<feature type="binding site" evidence="2">
    <location>
        <position position="31"/>
    </location>
    <ligand>
        <name>D-fructose</name>
        <dbReference type="ChEBI" id="CHEBI:37721"/>
    </ligand>
</feature>
<feature type="binding site" evidence="2">
    <location>
        <position position="166"/>
    </location>
    <ligand>
        <name>D-fructose</name>
        <dbReference type="ChEBI" id="CHEBI:37721"/>
    </ligand>
</feature>
<feature type="binding site" evidence="2">
    <location>
        <position position="287"/>
    </location>
    <ligand>
        <name>D-fructose</name>
        <dbReference type="ChEBI" id="CHEBI:37721"/>
    </ligand>
</feature>
<feature type="binding site" evidence="2">
    <location>
        <begin position="295"/>
        <end position="297"/>
    </location>
    <ligand>
        <name>D-fructose</name>
        <dbReference type="ChEBI" id="CHEBI:37721"/>
    </ligand>
</feature>
<feature type="binding site" evidence="2">
    <location>
        <position position="386"/>
    </location>
    <ligand>
        <name>D-fructose</name>
        <dbReference type="ChEBI" id="CHEBI:37721"/>
    </ligand>
</feature>
<feature type="binding site" evidence="2">
    <location>
        <begin position="418"/>
        <end position="419"/>
    </location>
    <ligand>
        <name>D-fructose</name>
        <dbReference type="ChEBI" id="CHEBI:37721"/>
    </ligand>
</feature>
<feature type="modified residue" description="N-acetylmethionine" evidence="1">
    <location>
        <position position="1"/>
    </location>
</feature>
<feature type="glycosylation site" description="N-linked (GlcNAc...) asparagine" evidence="3">
    <location>
        <position position="50"/>
    </location>
</feature>
<feature type="sequence conflict" description="In Ref. 1; AAD42235." evidence="10" ref="1">
    <original>G</original>
    <variation>S</variation>
    <location>
        <position position="84"/>
    </location>
</feature>
<feature type="sequence conflict" description="In Ref. 1; AAD42235." evidence="10" ref="1">
    <original>M</original>
    <variation>V</variation>
    <location>
        <position position="87"/>
    </location>
</feature>
<feature type="sequence conflict" description="In Ref. 1; AAD42235." evidence="10" ref="1">
    <original>T</original>
    <variation>N</variation>
    <location>
        <position position="90"/>
    </location>
</feature>
<feature type="sequence conflict" description="In Ref. 1; AAD42235." evidence="10" ref="1">
    <original>RKG</original>
    <variation>KKR</variation>
    <location>
        <begin position="97"/>
        <end position="99"/>
    </location>
</feature>
<feature type="sequence conflict" description="In Ref. 1; AAD42235." evidence="10" ref="1">
    <original>L</original>
    <variation>F</variation>
    <location>
        <position position="114"/>
    </location>
</feature>
<feature type="sequence conflict" description="In Ref. 1; AAD42235." evidence="10" ref="1">
    <original>L</original>
    <variation>I</variation>
    <location>
        <position position="236"/>
    </location>
</feature>
<feature type="sequence conflict" description="In Ref. 1; AAD42235." evidence="10" ref="1">
    <original>N</original>
    <variation>I</variation>
    <location>
        <position position="471"/>
    </location>
</feature>
<dbReference type="EMBL" id="AF161071">
    <property type="protein sequence ID" value="AAD42235.1"/>
    <property type="molecule type" value="mRNA"/>
</dbReference>
<dbReference type="EMBL" id="AK029720">
    <property type="protein sequence ID" value="BAC26582.1"/>
    <property type="molecule type" value="mRNA"/>
</dbReference>
<dbReference type="EMBL" id="AL606971">
    <property type="status" value="NOT_ANNOTATED_CDS"/>
    <property type="molecule type" value="Genomic_DNA"/>
</dbReference>
<dbReference type="EMBL" id="CU210939">
    <property type="status" value="NOT_ANNOTATED_CDS"/>
    <property type="molecule type" value="Genomic_DNA"/>
</dbReference>
<dbReference type="EMBL" id="CH466594">
    <property type="protein sequence ID" value="EDL14883.1"/>
    <property type="molecule type" value="Genomic_DNA"/>
</dbReference>
<dbReference type="EMBL" id="BC023500">
    <property type="protein sequence ID" value="AAH23500.1"/>
    <property type="molecule type" value="mRNA"/>
</dbReference>
<dbReference type="CCDS" id="CCDS18968.1"/>
<dbReference type="RefSeq" id="NP_062715.2">
    <property type="nucleotide sequence ID" value="NM_019741.3"/>
</dbReference>
<dbReference type="RefSeq" id="XP_006539139.1">
    <property type="nucleotide sequence ID" value="XM_006539076.5"/>
</dbReference>
<dbReference type="RefSeq" id="XP_017175818.1">
    <property type="nucleotide sequence ID" value="XM_017320329.1"/>
</dbReference>
<dbReference type="SMR" id="Q9WV38"/>
<dbReference type="BioGRID" id="208011">
    <property type="interactions" value="1"/>
</dbReference>
<dbReference type="FunCoup" id="Q9WV38">
    <property type="interactions" value="165"/>
</dbReference>
<dbReference type="STRING" id="10090.ENSMUSP00000030826"/>
<dbReference type="GlyCosmos" id="Q9WV38">
    <property type="glycosylation" value="1 site, No reported glycans"/>
</dbReference>
<dbReference type="GlyGen" id="Q9WV38">
    <property type="glycosylation" value="2 sites"/>
</dbReference>
<dbReference type="iPTMnet" id="Q9WV38"/>
<dbReference type="PhosphoSitePlus" id="Q9WV38"/>
<dbReference type="SwissPalm" id="Q9WV38"/>
<dbReference type="jPOST" id="Q9WV38"/>
<dbReference type="PaxDb" id="10090-ENSMUSP00000030826"/>
<dbReference type="ProteomicsDB" id="271187"/>
<dbReference type="Antibodypedia" id="1404">
    <property type="antibodies" value="471 antibodies from 33 providers"/>
</dbReference>
<dbReference type="DNASU" id="56485"/>
<dbReference type="Ensembl" id="ENSMUST00000030826.4">
    <property type="protein sequence ID" value="ENSMUSP00000030826.3"/>
    <property type="gene ID" value="ENSMUSG00000028976.11"/>
</dbReference>
<dbReference type="GeneID" id="56485"/>
<dbReference type="KEGG" id="mmu:56485"/>
<dbReference type="UCSC" id="uc008vxk.1">
    <property type="organism name" value="mouse"/>
</dbReference>
<dbReference type="AGR" id="MGI:1928369"/>
<dbReference type="CTD" id="6518"/>
<dbReference type="MGI" id="MGI:1928369">
    <property type="gene designation" value="Slc2a5"/>
</dbReference>
<dbReference type="VEuPathDB" id="HostDB:ENSMUSG00000028976"/>
<dbReference type="eggNOG" id="KOG0569">
    <property type="taxonomic scope" value="Eukaryota"/>
</dbReference>
<dbReference type="GeneTree" id="ENSGT00940000156846"/>
<dbReference type="HOGENOM" id="CLU_001265_30_5_1"/>
<dbReference type="InParanoid" id="Q9WV38"/>
<dbReference type="OMA" id="QTTVSWM"/>
<dbReference type="OrthoDB" id="4540492at2759"/>
<dbReference type="PhylomeDB" id="Q9WV38"/>
<dbReference type="TreeFam" id="TF313762"/>
<dbReference type="Reactome" id="R-MMU-6798695">
    <property type="pathway name" value="Neutrophil degranulation"/>
</dbReference>
<dbReference type="Reactome" id="R-MMU-8981373">
    <property type="pathway name" value="Intestinal hexose absorption"/>
</dbReference>
<dbReference type="BioGRID-ORCS" id="56485">
    <property type="hits" value="2 hits in 78 CRISPR screens"/>
</dbReference>
<dbReference type="PRO" id="PR:Q9WV38"/>
<dbReference type="Proteomes" id="UP000000589">
    <property type="component" value="Chromosome 4"/>
</dbReference>
<dbReference type="RNAct" id="Q9WV38">
    <property type="molecule type" value="protein"/>
</dbReference>
<dbReference type="Bgee" id="ENSMUSG00000028976">
    <property type="expression patterns" value="Expressed in seminiferous tubule of testis and 91 other cell types or tissues"/>
</dbReference>
<dbReference type="GO" id="GO:0016324">
    <property type="term" value="C:apical plasma membrane"/>
    <property type="evidence" value="ECO:0000314"/>
    <property type="project" value="UniProtKB"/>
</dbReference>
<dbReference type="GO" id="GO:0005886">
    <property type="term" value="C:plasma membrane"/>
    <property type="evidence" value="ECO:0000250"/>
    <property type="project" value="UniProtKB"/>
</dbReference>
<dbReference type="GO" id="GO:0042383">
    <property type="term" value="C:sarcolemma"/>
    <property type="evidence" value="ECO:0000250"/>
    <property type="project" value="UniProtKB"/>
</dbReference>
<dbReference type="GO" id="GO:0070061">
    <property type="term" value="F:fructose binding"/>
    <property type="evidence" value="ECO:0000250"/>
    <property type="project" value="UniProtKB"/>
</dbReference>
<dbReference type="GO" id="GO:0005353">
    <property type="term" value="F:fructose transmembrane transporter activity"/>
    <property type="evidence" value="ECO:0000315"/>
    <property type="project" value="UniProtKB"/>
</dbReference>
<dbReference type="GO" id="GO:0071332">
    <property type="term" value="P:cellular response to fructose stimulus"/>
    <property type="evidence" value="ECO:0000314"/>
    <property type="project" value="UniProtKB"/>
</dbReference>
<dbReference type="GO" id="GO:1990539">
    <property type="term" value="P:fructose import across plasma membrane"/>
    <property type="evidence" value="ECO:0000315"/>
    <property type="project" value="UniProtKB"/>
</dbReference>
<dbReference type="GO" id="GO:0003044">
    <property type="term" value="P:regulation of systemic arterial blood pressure mediated by a chemical signal"/>
    <property type="evidence" value="ECO:0000315"/>
    <property type="project" value="UniProtKB"/>
</dbReference>
<dbReference type="GO" id="GO:0009750">
    <property type="term" value="P:response to fructose"/>
    <property type="evidence" value="ECO:0000315"/>
    <property type="project" value="UniProtKB"/>
</dbReference>
<dbReference type="CDD" id="cd17432">
    <property type="entry name" value="MFS_GLUT_Class2"/>
    <property type="match status" value="1"/>
</dbReference>
<dbReference type="FunFam" id="1.20.1250.20:FF:001511">
    <property type="entry name" value="Solute carrier family 2, facilitated glucose transporter member 5"/>
    <property type="match status" value="1"/>
</dbReference>
<dbReference type="Gene3D" id="1.20.1250.20">
    <property type="entry name" value="MFS general substrate transporter like domains"/>
    <property type="match status" value="1"/>
</dbReference>
<dbReference type="InterPro" id="IPR002442">
    <property type="entry name" value="Fru_transpt_5"/>
</dbReference>
<dbReference type="InterPro" id="IPR045263">
    <property type="entry name" value="GLUT"/>
</dbReference>
<dbReference type="InterPro" id="IPR020846">
    <property type="entry name" value="MFS_dom"/>
</dbReference>
<dbReference type="InterPro" id="IPR005828">
    <property type="entry name" value="MFS_sugar_transport-like"/>
</dbReference>
<dbReference type="InterPro" id="IPR036259">
    <property type="entry name" value="MFS_trans_sf"/>
</dbReference>
<dbReference type="InterPro" id="IPR003663">
    <property type="entry name" value="Sugar/inositol_transpt"/>
</dbReference>
<dbReference type="InterPro" id="IPR005829">
    <property type="entry name" value="Sugar_transporter_CS"/>
</dbReference>
<dbReference type="NCBIfam" id="TIGR00879">
    <property type="entry name" value="SP"/>
    <property type="match status" value="1"/>
</dbReference>
<dbReference type="PANTHER" id="PTHR23503">
    <property type="entry name" value="SOLUTE CARRIER FAMILY 2"/>
    <property type="match status" value="1"/>
</dbReference>
<dbReference type="PANTHER" id="PTHR23503:SF32">
    <property type="entry name" value="SOLUTE CARRIER FAMILY 2, FACILITATED GLUCOSE TRANSPORTER MEMBER 5"/>
    <property type="match status" value="1"/>
</dbReference>
<dbReference type="Pfam" id="PF00083">
    <property type="entry name" value="Sugar_tr"/>
    <property type="match status" value="1"/>
</dbReference>
<dbReference type="PRINTS" id="PR01194">
    <property type="entry name" value="GLUCTRSPORT5"/>
</dbReference>
<dbReference type="PRINTS" id="PR00171">
    <property type="entry name" value="SUGRTRNSPORT"/>
</dbReference>
<dbReference type="SUPFAM" id="SSF103473">
    <property type="entry name" value="MFS general substrate transporter"/>
    <property type="match status" value="1"/>
</dbReference>
<dbReference type="PROSITE" id="PS50850">
    <property type="entry name" value="MFS"/>
    <property type="match status" value="1"/>
</dbReference>
<dbReference type="PROSITE" id="PS00216">
    <property type="entry name" value="SUGAR_TRANSPORT_1"/>
    <property type="match status" value="1"/>
</dbReference>
<dbReference type="PROSITE" id="PS00217">
    <property type="entry name" value="SUGAR_TRANSPORT_2"/>
    <property type="match status" value="1"/>
</dbReference>
<gene>
    <name evidence="11" type="primary">Slc2a5</name>
    <name evidence="9" type="synonym">Glut5</name>
</gene>
<name>GTR5_MOUSE</name>
<protein>
    <recommendedName>
        <fullName evidence="10">Solute carrier family 2, facilitated glucose transporter member 5</fullName>
    </recommendedName>
    <alternativeName>
        <fullName evidence="10">Fructose transporter</fullName>
    </alternativeName>
    <alternativeName>
        <fullName evidence="9">Glucose transporter type 5, small intestine</fullName>
        <shortName evidence="9">GLUT-5</shortName>
    </alternativeName>
</protein>
<organism>
    <name type="scientific">Mus musculus</name>
    <name type="common">Mouse</name>
    <dbReference type="NCBI Taxonomy" id="10090"/>
    <lineage>
        <taxon>Eukaryota</taxon>
        <taxon>Metazoa</taxon>
        <taxon>Chordata</taxon>
        <taxon>Craniata</taxon>
        <taxon>Vertebrata</taxon>
        <taxon>Euteleostomi</taxon>
        <taxon>Mammalia</taxon>
        <taxon>Eutheria</taxon>
        <taxon>Euarchontoglires</taxon>
        <taxon>Glires</taxon>
        <taxon>Rodentia</taxon>
        <taxon>Myomorpha</taxon>
        <taxon>Muroidea</taxon>
        <taxon>Muridae</taxon>
        <taxon>Murinae</taxon>
        <taxon>Mus</taxon>
        <taxon>Mus</taxon>
    </lineage>
</organism>
<proteinExistence type="evidence at protein level"/>
<keyword id="KW-0007">Acetylation</keyword>
<keyword id="KW-1003">Cell membrane</keyword>
<keyword id="KW-0325">Glycoprotein</keyword>
<keyword id="KW-0472">Membrane</keyword>
<keyword id="KW-1185">Reference proteome</keyword>
<keyword id="KW-0762">Sugar transport</keyword>
<keyword id="KW-0812">Transmembrane</keyword>
<keyword id="KW-1133">Transmembrane helix</keyword>
<keyword id="KW-0813">Transport</keyword>
<reference key="1">
    <citation type="journal article" date="2002" name="Biochim. Biophys. Acta">
        <title>Cloning and functional characterization of the mouse fructose transporter, GLUT5.</title>
        <authorList>
            <person name="Kwon O."/>
            <person name="Levine M."/>
            <person name="Burant C.F."/>
        </authorList>
    </citation>
    <scope>NUCLEOTIDE SEQUENCE [MRNA]</scope>
    <scope>FUNCTION</scope>
    <scope>SUBCELLULAR LOCATION</scope>
    <scope>TISSUE SPECIFICITY</scope>
    <scope>INDUCTION BY FRUCTOSE</scope>
    <scope>ACTIVITY REGULATION</scope>
    <source>
        <strain>C57BL/6J</strain>
    </source>
</reference>
<reference key="2">
    <citation type="journal article" date="2005" name="Science">
        <title>The transcriptional landscape of the mammalian genome.</title>
        <authorList>
            <person name="Carninci P."/>
            <person name="Kasukawa T."/>
            <person name="Katayama S."/>
            <person name="Gough J."/>
            <person name="Frith M.C."/>
            <person name="Maeda N."/>
            <person name="Oyama R."/>
            <person name="Ravasi T."/>
            <person name="Lenhard B."/>
            <person name="Wells C."/>
            <person name="Kodzius R."/>
            <person name="Shimokawa K."/>
            <person name="Bajic V.B."/>
            <person name="Brenner S.E."/>
            <person name="Batalov S."/>
            <person name="Forrest A.R."/>
            <person name="Zavolan M."/>
            <person name="Davis M.J."/>
            <person name="Wilming L.G."/>
            <person name="Aidinis V."/>
            <person name="Allen J.E."/>
            <person name="Ambesi-Impiombato A."/>
            <person name="Apweiler R."/>
            <person name="Aturaliya R.N."/>
            <person name="Bailey T.L."/>
            <person name="Bansal M."/>
            <person name="Baxter L."/>
            <person name="Beisel K.W."/>
            <person name="Bersano T."/>
            <person name="Bono H."/>
            <person name="Chalk A.M."/>
            <person name="Chiu K.P."/>
            <person name="Choudhary V."/>
            <person name="Christoffels A."/>
            <person name="Clutterbuck D.R."/>
            <person name="Crowe M.L."/>
            <person name="Dalla E."/>
            <person name="Dalrymple B.P."/>
            <person name="de Bono B."/>
            <person name="Della Gatta G."/>
            <person name="di Bernardo D."/>
            <person name="Down T."/>
            <person name="Engstrom P."/>
            <person name="Fagiolini M."/>
            <person name="Faulkner G."/>
            <person name="Fletcher C.F."/>
            <person name="Fukushima T."/>
            <person name="Furuno M."/>
            <person name="Futaki S."/>
            <person name="Gariboldi M."/>
            <person name="Georgii-Hemming P."/>
            <person name="Gingeras T.R."/>
            <person name="Gojobori T."/>
            <person name="Green R.E."/>
            <person name="Gustincich S."/>
            <person name="Harbers M."/>
            <person name="Hayashi Y."/>
            <person name="Hensch T.K."/>
            <person name="Hirokawa N."/>
            <person name="Hill D."/>
            <person name="Huminiecki L."/>
            <person name="Iacono M."/>
            <person name="Ikeo K."/>
            <person name="Iwama A."/>
            <person name="Ishikawa T."/>
            <person name="Jakt M."/>
            <person name="Kanapin A."/>
            <person name="Katoh M."/>
            <person name="Kawasawa Y."/>
            <person name="Kelso J."/>
            <person name="Kitamura H."/>
            <person name="Kitano H."/>
            <person name="Kollias G."/>
            <person name="Krishnan S.P."/>
            <person name="Kruger A."/>
            <person name="Kummerfeld S.K."/>
            <person name="Kurochkin I.V."/>
            <person name="Lareau L.F."/>
            <person name="Lazarevic D."/>
            <person name="Lipovich L."/>
            <person name="Liu J."/>
            <person name="Liuni S."/>
            <person name="McWilliam S."/>
            <person name="Madan Babu M."/>
            <person name="Madera M."/>
            <person name="Marchionni L."/>
            <person name="Matsuda H."/>
            <person name="Matsuzawa S."/>
            <person name="Miki H."/>
            <person name="Mignone F."/>
            <person name="Miyake S."/>
            <person name="Morris K."/>
            <person name="Mottagui-Tabar S."/>
            <person name="Mulder N."/>
            <person name="Nakano N."/>
            <person name="Nakauchi H."/>
            <person name="Ng P."/>
            <person name="Nilsson R."/>
            <person name="Nishiguchi S."/>
            <person name="Nishikawa S."/>
            <person name="Nori F."/>
            <person name="Ohara O."/>
            <person name="Okazaki Y."/>
            <person name="Orlando V."/>
            <person name="Pang K.C."/>
            <person name="Pavan W.J."/>
            <person name="Pavesi G."/>
            <person name="Pesole G."/>
            <person name="Petrovsky N."/>
            <person name="Piazza S."/>
            <person name="Reed J."/>
            <person name="Reid J.F."/>
            <person name="Ring B.Z."/>
            <person name="Ringwald M."/>
            <person name="Rost B."/>
            <person name="Ruan Y."/>
            <person name="Salzberg S.L."/>
            <person name="Sandelin A."/>
            <person name="Schneider C."/>
            <person name="Schoenbach C."/>
            <person name="Sekiguchi K."/>
            <person name="Semple C.A."/>
            <person name="Seno S."/>
            <person name="Sessa L."/>
            <person name="Sheng Y."/>
            <person name="Shibata Y."/>
            <person name="Shimada H."/>
            <person name="Shimada K."/>
            <person name="Silva D."/>
            <person name="Sinclair B."/>
            <person name="Sperling S."/>
            <person name="Stupka E."/>
            <person name="Sugiura K."/>
            <person name="Sultana R."/>
            <person name="Takenaka Y."/>
            <person name="Taki K."/>
            <person name="Tammoja K."/>
            <person name="Tan S.L."/>
            <person name="Tang S."/>
            <person name="Taylor M.S."/>
            <person name="Tegner J."/>
            <person name="Teichmann S.A."/>
            <person name="Ueda H.R."/>
            <person name="van Nimwegen E."/>
            <person name="Verardo R."/>
            <person name="Wei C.L."/>
            <person name="Yagi K."/>
            <person name="Yamanishi H."/>
            <person name="Zabarovsky E."/>
            <person name="Zhu S."/>
            <person name="Zimmer A."/>
            <person name="Hide W."/>
            <person name="Bult C."/>
            <person name="Grimmond S.M."/>
            <person name="Teasdale R.D."/>
            <person name="Liu E.T."/>
            <person name="Brusic V."/>
            <person name="Quackenbush J."/>
            <person name="Wahlestedt C."/>
            <person name="Mattick J.S."/>
            <person name="Hume D.A."/>
            <person name="Kai C."/>
            <person name="Sasaki D."/>
            <person name="Tomaru Y."/>
            <person name="Fukuda S."/>
            <person name="Kanamori-Katayama M."/>
            <person name="Suzuki M."/>
            <person name="Aoki J."/>
            <person name="Arakawa T."/>
            <person name="Iida J."/>
            <person name="Imamura K."/>
            <person name="Itoh M."/>
            <person name="Kato T."/>
            <person name="Kawaji H."/>
            <person name="Kawagashira N."/>
            <person name="Kawashima T."/>
            <person name="Kojima M."/>
            <person name="Kondo S."/>
            <person name="Konno H."/>
            <person name="Nakano K."/>
            <person name="Ninomiya N."/>
            <person name="Nishio T."/>
            <person name="Okada M."/>
            <person name="Plessy C."/>
            <person name="Shibata K."/>
            <person name="Shiraki T."/>
            <person name="Suzuki S."/>
            <person name="Tagami M."/>
            <person name="Waki K."/>
            <person name="Watahiki A."/>
            <person name="Okamura-Oho Y."/>
            <person name="Suzuki H."/>
            <person name="Kawai J."/>
            <person name="Hayashizaki Y."/>
        </authorList>
    </citation>
    <scope>NUCLEOTIDE SEQUENCE [LARGE SCALE MRNA]</scope>
    <source>
        <strain>C57BL/6J</strain>
        <tissue>Testis</tissue>
    </source>
</reference>
<reference key="3">
    <citation type="journal article" date="2009" name="PLoS Biol.">
        <title>Lineage-specific biology revealed by a finished genome assembly of the mouse.</title>
        <authorList>
            <person name="Church D.M."/>
            <person name="Goodstadt L."/>
            <person name="Hillier L.W."/>
            <person name="Zody M.C."/>
            <person name="Goldstein S."/>
            <person name="She X."/>
            <person name="Bult C.J."/>
            <person name="Agarwala R."/>
            <person name="Cherry J.L."/>
            <person name="DiCuccio M."/>
            <person name="Hlavina W."/>
            <person name="Kapustin Y."/>
            <person name="Meric P."/>
            <person name="Maglott D."/>
            <person name="Birtle Z."/>
            <person name="Marques A.C."/>
            <person name="Graves T."/>
            <person name="Zhou S."/>
            <person name="Teague B."/>
            <person name="Potamousis K."/>
            <person name="Churas C."/>
            <person name="Place M."/>
            <person name="Herschleb J."/>
            <person name="Runnheim R."/>
            <person name="Forrest D."/>
            <person name="Amos-Landgraf J."/>
            <person name="Schwartz D.C."/>
            <person name="Cheng Z."/>
            <person name="Lindblad-Toh K."/>
            <person name="Eichler E.E."/>
            <person name="Ponting C.P."/>
        </authorList>
    </citation>
    <scope>NUCLEOTIDE SEQUENCE [LARGE SCALE GENOMIC DNA]</scope>
    <source>
        <strain>C57BL/6J</strain>
    </source>
</reference>
<reference key="4">
    <citation type="submission" date="2005-07" db="EMBL/GenBank/DDBJ databases">
        <authorList>
            <person name="Mural R.J."/>
            <person name="Adams M.D."/>
            <person name="Myers E.W."/>
            <person name="Smith H.O."/>
            <person name="Venter J.C."/>
        </authorList>
    </citation>
    <scope>NUCLEOTIDE SEQUENCE [LARGE SCALE GENOMIC DNA]</scope>
</reference>
<reference key="5">
    <citation type="journal article" date="2004" name="Genome Res.">
        <title>The status, quality, and expansion of the NIH full-length cDNA project: the Mammalian Gene Collection (MGC).</title>
        <authorList>
            <consortium name="The MGC Project Team"/>
        </authorList>
    </citation>
    <scope>NUCLEOTIDE SEQUENCE [LARGE SCALE MRNA]</scope>
    <source>
        <strain>FVB/N</strain>
        <tissue>Kidney</tissue>
    </source>
</reference>
<reference key="6">
    <citation type="journal article" date="2008" name="Brain Res.">
        <title>Glucose transporter 5 is undetectable in outer hair cells and does not contribute to cochlear amplification.</title>
        <authorList>
            <person name="Wu X."/>
            <person name="Wang X."/>
            <person name="Gao J."/>
            <person name="Yu Y."/>
            <person name="Jia S."/>
            <person name="Zheng J."/>
            <person name="Dallos P."/>
            <person name="He D.Z."/>
            <person name="Cheatham M."/>
            <person name="Zuo J."/>
        </authorList>
    </citation>
    <scope>DISRUPTION PHENOTYPE</scope>
    <scope>TISSUE SPECIFICITY</scope>
</reference>
<reference key="7">
    <citation type="journal article" date="2008" name="Kidney Int.">
        <title>Fructose-induced hypertension: essential role of chloride and fructose absorbing transporters PAT1 and Glut5.</title>
        <authorList>
            <person name="Singh A.K."/>
            <person name="Amlal H."/>
            <person name="Haas P.J."/>
            <person name="Dringenberg U."/>
            <person name="Fussell S."/>
            <person name="Barone S.L."/>
            <person name="Engelhardt R."/>
            <person name="Zuo J."/>
            <person name="Seidler U."/>
            <person name="Soleimani M."/>
        </authorList>
    </citation>
    <scope>SUBCELLULAR LOCATION</scope>
    <scope>INDUCTION</scope>
    <scope>TISSUE SPECIFICITY</scope>
</reference>
<reference key="8">
    <citation type="journal article" date="2009" name="J. Biol. Chem.">
        <title>Slc2a5 (Glut5) is essential for the absorption of fructose in the intestine and generation of fructose-induced hypertension.</title>
        <authorList>
            <person name="Barone S."/>
            <person name="Fussell S.L."/>
            <person name="Singh A.K."/>
            <person name="Lucas F."/>
            <person name="Xu J."/>
            <person name="Kim C."/>
            <person name="Wu X."/>
            <person name="Yu Y."/>
            <person name="Amlal H."/>
            <person name="Seidler U."/>
            <person name="Zuo J."/>
            <person name="Soleimani M."/>
        </authorList>
    </citation>
    <scope>DISRUPTION PHENOTYPE</scope>
    <scope>FUNCTION</scope>
    <scope>SUBCELLULAR LOCATION</scope>
    <scope>TISSUE SPECIFICITY</scope>
    <scope>INDUCTION BY FRUCTOSE</scope>
</reference>
<reference key="9">
    <citation type="journal article" date="2015" name="FASEB J.">
        <title>Transport, metabolism, and endosomal trafficking-dependent regulation of intestinal fructose absorption.</title>
        <authorList>
            <person name="Patel C."/>
            <person name="Douard V."/>
            <person name="Yu S."/>
            <person name="Gao N."/>
            <person name="Ferraris R.P."/>
        </authorList>
    </citation>
    <scope>DISRUPTION PHENOTYPE</scope>
    <scope>FUNCTION</scope>
    <scope>SUBCELLULAR LOCATION</scope>
    <scope>TISSUE SPECIFICITY</scope>
    <scope>INDUCTION BY FRUCTOSE</scope>
</reference>
<evidence type="ECO:0000250" key="1">
    <source>
        <dbReference type="UniProtKB" id="P22732"/>
    </source>
</evidence>
<evidence type="ECO:0000250" key="2">
    <source>
        <dbReference type="UniProtKB" id="P43427"/>
    </source>
</evidence>
<evidence type="ECO:0000255" key="3"/>
<evidence type="ECO:0000269" key="4">
    <source>
    </source>
</evidence>
<evidence type="ECO:0000269" key="5">
    <source>
    </source>
</evidence>
<evidence type="ECO:0000269" key="6">
    <source>
    </source>
</evidence>
<evidence type="ECO:0000269" key="7">
    <source>
    </source>
</evidence>
<evidence type="ECO:0000269" key="8">
    <source>
    </source>
</evidence>
<evidence type="ECO:0000303" key="9">
    <source>
    </source>
</evidence>
<evidence type="ECO:0000305" key="10"/>
<evidence type="ECO:0000312" key="11">
    <source>
        <dbReference type="MGI" id="MGI:1928369"/>
    </source>
</evidence>